<sequence>MGIKVGVLGAKGRVGQTIVAAVNESDDLELVAEIGVDDDLSLLVDNGAEVVVDFTTPNAVMGNLEFCINNGISAVVGTTGFDDARLEQVRDWLEGKDNVGVLIAPNFAISAVLTMVFSKQAARFFESAEVIELHHPNKLDAPSGTAIHTAQGIAAARKEAGMDAQPDATEQALEGSRGASVDGIPVHAVRMSGMVAHEQVIFGTQGQTLTIKQDSYDRNSFAPGVLVGVRNIAQHPGLVVGLEHYLGL</sequence>
<keyword id="KW-0002">3D-structure</keyword>
<keyword id="KW-0028">Amino-acid biosynthesis</keyword>
<keyword id="KW-0963">Cytoplasm</keyword>
<keyword id="KW-0220">Diaminopimelate biosynthesis</keyword>
<keyword id="KW-0457">Lysine biosynthesis</keyword>
<keyword id="KW-0520">NAD</keyword>
<keyword id="KW-0521">NADP</keyword>
<keyword id="KW-0560">Oxidoreductase</keyword>
<keyword id="KW-1185">Reference proteome</keyword>
<dbReference type="EC" id="1.17.1.8" evidence="1"/>
<dbReference type="EMBL" id="X67737">
    <property type="protein sequence ID" value="CAA47968.1"/>
    <property type="molecule type" value="Genomic_DNA"/>
</dbReference>
<dbReference type="EMBL" id="Z21502">
    <property type="protein sequence ID" value="CAA79712.1"/>
    <property type="molecule type" value="Genomic_DNA"/>
</dbReference>
<dbReference type="EMBL" id="BA000036">
    <property type="protein sequence ID" value="BAB99366.1"/>
    <property type="molecule type" value="Genomic_DNA"/>
</dbReference>
<dbReference type="EMBL" id="BX927153">
    <property type="protein sequence ID" value="CAF20314.1"/>
    <property type="molecule type" value="Genomic_DNA"/>
</dbReference>
<dbReference type="PIR" id="A40626">
    <property type="entry name" value="A40626"/>
</dbReference>
<dbReference type="RefSeq" id="NP_601179.1">
    <property type="nucleotide sequence ID" value="NC_003450.3"/>
</dbReference>
<dbReference type="RefSeq" id="WP_011014794.1">
    <property type="nucleotide sequence ID" value="NC_006958.1"/>
</dbReference>
<dbReference type="PDB" id="5EER">
    <property type="method" value="X-ray"/>
    <property type="resolution" value="2.50 A"/>
    <property type="chains" value="A=2-248"/>
</dbReference>
<dbReference type="PDB" id="5EES">
    <property type="method" value="X-ray"/>
    <property type="resolution" value="2.15 A"/>
    <property type="chains" value="A=2-248"/>
</dbReference>
<dbReference type="PDBsum" id="5EER"/>
<dbReference type="PDBsum" id="5EES"/>
<dbReference type="SMR" id="P40110"/>
<dbReference type="STRING" id="196627.cg2163"/>
<dbReference type="GeneID" id="1019930"/>
<dbReference type="KEGG" id="cgb:cg2163"/>
<dbReference type="KEGG" id="cgl:Cgl1973"/>
<dbReference type="PATRIC" id="fig|196627.13.peg.1910"/>
<dbReference type="eggNOG" id="COG0289">
    <property type="taxonomic scope" value="Bacteria"/>
</dbReference>
<dbReference type="HOGENOM" id="CLU_047479_0_1_11"/>
<dbReference type="OrthoDB" id="9790352at2"/>
<dbReference type="BioCyc" id="CORYNE:G18NG-11565-MONOMER"/>
<dbReference type="BioCyc" id="MetaCyc:MONOMER-6445"/>
<dbReference type="BRENDA" id="1.17.1.8">
    <property type="organism ID" value="960"/>
</dbReference>
<dbReference type="UniPathway" id="UPA00034">
    <property type="reaction ID" value="UER00018"/>
</dbReference>
<dbReference type="EvolutionaryTrace" id="P40110"/>
<dbReference type="Proteomes" id="UP000000582">
    <property type="component" value="Chromosome"/>
</dbReference>
<dbReference type="Proteomes" id="UP000001009">
    <property type="component" value="Chromosome"/>
</dbReference>
<dbReference type="GO" id="GO:0005829">
    <property type="term" value="C:cytosol"/>
    <property type="evidence" value="ECO:0007669"/>
    <property type="project" value="TreeGrafter"/>
</dbReference>
<dbReference type="GO" id="GO:0008839">
    <property type="term" value="F:4-hydroxy-tetrahydrodipicolinate reductase"/>
    <property type="evidence" value="ECO:0007669"/>
    <property type="project" value="UniProtKB-EC"/>
</dbReference>
<dbReference type="GO" id="GO:0051287">
    <property type="term" value="F:NAD binding"/>
    <property type="evidence" value="ECO:0007669"/>
    <property type="project" value="UniProtKB-UniRule"/>
</dbReference>
<dbReference type="GO" id="GO:0050661">
    <property type="term" value="F:NADP binding"/>
    <property type="evidence" value="ECO:0007669"/>
    <property type="project" value="UniProtKB-UniRule"/>
</dbReference>
<dbReference type="GO" id="GO:0016726">
    <property type="term" value="F:oxidoreductase activity, acting on CH or CH2 groups, NAD or NADP as acceptor"/>
    <property type="evidence" value="ECO:0007669"/>
    <property type="project" value="UniProtKB-UniRule"/>
</dbReference>
<dbReference type="GO" id="GO:0019877">
    <property type="term" value="P:diaminopimelate biosynthetic process"/>
    <property type="evidence" value="ECO:0007669"/>
    <property type="project" value="UniProtKB-UniRule"/>
</dbReference>
<dbReference type="GO" id="GO:0009089">
    <property type="term" value="P:lysine biosynthetic process via diaminopimelate"/>
    <property type="evidence" value="ECO:0007669"/>
    <property type="project" value="UniProtKB-UniRule"/>
</dbReference>
<dbReference type="CDD" id="cd02274">
    <property type="entry name" value="DHDPR_N"/>
    <property type="match status" value="1"/>
</dbReference>
<dbReference type="FunFam" id="3.30.360.10:FF:000009">
    <property type="entry name" value="4-hydroxy-tetrahydrodipicolinate reductase"/>
    <property type="match status" value="1"/>
</dbReference>
<dbReference type="Gene3D" id="3.30.360.10">
    <property type="entry name" value="Dihydrodipicolinate Reductase, domain 2"/>
    <property type="match status" value="1"/>
</dbReference>
<dbReference type="Gene3D" id="3.40.50.720">
    <property type="entry name" value="NAD(P)-binding Rossmann-like Domain"/>
    <property type="match status" value="1"/>
</dbReference>
<dbReference type="HAMAP" id="MF_00102">
    <property type="entry name" value="DapB"/>
    <property type="match status" value="1"/>
</dbReference>
<dbReference type="InterPro" id="IPR022663">
    <property type="entry name" value="DapB_C"/>
</dbReference>
<dbReference type="InterPro" id="IPR000846">
    <property type="entry name" value="DapB_N"/>
</dbReference>
<dbReference type="InterPro" id="IPR022664">
    <property type="entry name" value="DapB_N_CS"/>
</dbReference>
<dbReference type="InterPro" id="IPR023940">
    <property type="entry name" value="DHDPR_bac"/>
</dbReference>
<dbReference type="InterPro" id="IPR036291">
    <property type="entry name" value="NAD(P)-bd_dom_sf"/>
</dbReference>
<dbReference type="NCBIfam" id="TIGR00036">
    <property type="entry name" value="dapB"/>
    <property type="match status" value="1"/>
</dbReference>
<dbReference type="PANTHER" id="PTHR20836:SF0">
    <property type="entry name" value="4-HYDROXY-TETRAHYDRODIPICOLINATE REDUCTASE 1, CHLOROPLASTIC-RELATED"/>
    <property type="match status" value="1"/>
</dbReference>
<dbReference type="PANTHER" id="PTHR20836">
    <property type="entry name" value="DIHYDRODIPICOLINATE REDUCTASE"/>
    <property type="match status" value="1"/>
</dbReference>
<dbReference type="Pfam" id="PF05173">
    <property type="entry name" value="DapB_C"/>
    <property type="match status" value="1"/>
</dbReference>
<dbReference type="Pfam" id="PF01113">
    <property type="entry name" value="DapB_N"/>
    <property type="match status" value="1"/>
</dbReference>
<dbReference type="PIRSF" id="PIRSF000161">
    <property type="entry name" value="DHPR"/>
    <property type="match status" value="1"/>
</dbReference>
<dbReference type="SUPFAM" id="SSF55347">
    <property type="entry name" value="Glyceraldehyde-3-phosphate dehydrogenase-like, C-terminal domain"/>
    <property type="match status" value="1"/>
</dbReference>
<dbReference type="SUPFAM" id="SSF51735">
    <property type="entry name" value="NAD(P)-binding Rossmann-fold domains"/>
    <property type="match status" value="1"/>
</dbReference>
<dbReference type="PROSITE" id="PS01298">
    <property type="entry name" value="DAPB"/>
    <property type="match status" value="1"/>
</dbReference>
<gene>
    <name evidence="1" type="primary">dapB</name>
    <name type="ordered locus">Cgl1973</name>
    <name type="ordered locus">cg2163</name>
</gene>
<proteinExistence type="evidence at protein level"/>
<name>DAPB_CORGL</name>
<accession>P40110</accession>
<accession>P42462</accession>
<reference key="1">
    <citation type="submission" date="1992-10" db="EMBL/GenBank/DDBJ databases">
        <authorList>
            <person name="Eikmanns B.J."/>
            <person name="Eggeling L."/>
            <person name="Thum-Schmitz N."/>
            <person name="Krumbach K."/>
        </authorList>
    </citation>
    <scope>NUCLEOTIDE SEQUENCE [GENOMIC DNA]</scope>
    <source>
        <strain>ATCC 13032 / DSM 20300 / JCM 1318 / BCRC 11384 / CCUG 27702 / LMG 3730 / NBRC 12168 / NCIMB 10025 / NRRL B-2784 / 534</strain>
    </source>
</reference>
<reference key="2">
    <citation type="journal article" date="1993" name="J. Bacteriol.">
        <title>A cluster of three genes (dapA, orf2, and dapB) of Brevibacterium lactofermentum encodes dihydrodipicolinate synthase, dihydrodipicolinate reductase, and a third polypeptide of unknown function.</title>
        <authorList>
            <person name="Pisabarro A."/>
            <person name="Malumbres M."/>
            <person name="Mateos L.M."/>
            <person name="Oguiza J.A."/>
            <person name="Martin J.F."/>
        </authorList>
    </citation>
    <scope>NUCLEOTIDE SEQUENCE [GENOMIC DNA]</scope>
    <source>
        <strain>ATCC 13869 / DSMZ 1412 / NCIMB 9567</strain>
    </source>
</reference>
<reference key="3">
    <citation type="journal article" date="2003" name="Appl. Microbiol. Biotechnol.">
        <title>The Corynebacterium glutamicum genome: features and impacts on biotechnological processes.</title>
        <authorList>
            <person name="Ikeda M."/>
            <person name="Nakagawa S."/>
        </authorList>
    </citation>
    <scope>NUCLEOTIDE SEQUENCE [LARGE SCALE GENOMIC DNA]</scope>
    <source>
        <strain>ATCC 13032 / DSM 20300 / JCM 1318 / BCRC 11384 / CCUG 27702 / LMG 3730 / NBRC 12168 / NCIMB 10025 / NRRL B-2784 / 534</strain>
    </source>
</reference>
<reference key="4">
    <citation type="journal article" date="2003" name="J. Biotechnol.">
        <title>The complete Corynebacterium glutamicum ATCC 13032 genome sequence and its impact on the production of L-aspartate-derived amino acids and vitamins.</title>
        <authorList>
            <person name="Kalinowski J."/>
            <person name="Bathe B."/>
            <person name="Bartels D."/>
            <person name="Bischoff N."/>
            <person name="Bott M."/>
            <person name="Burkovski A."/>
            <person name="Dusch N."/>
            <person name="Eggeling L."/>
            <person name="Eikmanns B.J."/>
            <person name="Gaigalat L."/>
            <person name="Goesmann A."/>
            <person name="Hartmann M."/>
            <person name="Huthmacher K."/>
            <person name="Kraemer R."/>
            <person name="Linke B."/>
            <person name="McHardy A.C."/>
            <person name="Meyer F."/>
            <person name="Moeckel B."/>
            <person name="Pfefferle W."/>
            <person name="Puehler A."/>
            <person name="Rey D.A."/>
            <person name="Rueckert C."/>
            <person name="Rupp O."/>
            <person name="Sahm H."/>
            <person name="Wendisch V.F."/>
            <person name="Wiegraebe I."/>
            <person name="Tauch A."/>
        </authorList>
    </citation>
    <scope>NUCLEOTIDE SEQUENCE [LARGE SCALE GENOMIC DNA]</scope>
    <source>
        <strain>ATCC 13032 / DSM 20300 / JCM 1318 / BCRC 11384 / CCUG 27702 / LMG 3730 / NBRC 12168 / NCIMB 10025 / NRRL B-2784 / 534</strain>
    </source>
</reference>
<feature type="chain" id="PRO_0000141435" description="4-hydroxy-tetrahydrodipicolinate reductase">
    <location>
        <begin position="1"/>
        <end position="248"/>
    </location>
</feature>
<feature type="active site" description="Proton donor/acceptor" evidence="1">
    <location>
        <position position="134"/>
    </location>
</feature>
<feature type="active site" description="Proton donor" evidence="1">
    <location>
        <position position="138"/>
    </location>
</feature>
<feature type="binding site" evidence="1">
    <location>
        <begin position="9"/>
        <end position="14"/>
    </location>
    <ligand>
        <name>NAD(+)</name>
        <dbReference type="ChEBI" id="CHEBI:57540"/>
    </ligand>
</feature>
<feature type="binding site" evidence="1">
    <location>
        <begin position="77"/>
        <end position="79"/>
    </location>
    <ligand>
        <name>NAD(+)</name>
        <dbReference type="ChEBI" id="CHEBI:57540"/>
    </ligand>
</feature>
<feature type="binding site" evidence="1">
    <location>
        <begin position="104"/>
        <end position="107"/>
    </location>
    <ligand>
        <name>NAD(+)</name>
        <dbReference type="ChEBI" id="CHEBI:57540"/>
    </ligand>
</feature>
<feature type="binding site" evidence="1">
    <location>
        <position position="135"/>
    </location>
    <ligand>
        <name>(S)-2,3,4,5-tetrahydrodipicolinate</name>
        <dbReference type="ChEBI" id="CHEBI:16845"/>
    </ligand>
</feature>
<feature type="binding site" evidence="1">
    <location>
        <begin position="144"/>
        <end position="145"/>
    </location>
    <ligand>
        <name>(S)-2,3,4,5-tetrahydrodipicolinate</name>
        <dbReference type="ChEBI" id="CHEBI:16845"/>
    </ligand>
</feature>
<feature type="sequence conflict" description="In Ref. 2; CAA79712." evidence="2" ref="2">
    <original>D</original>
    <variation>A</variation>
    <location>
        <position position="91"/>
    </location>
</feature>
<feature type="strand" evidence="4">
    <location>
        <begin position="4"/>
        <end position="8"/>
    </location>
</feature>
<feature type="turn" evidence="4">
    <location>
        <begin position="9"/>
        <end position="11"/>
    </location>
</feature>
<feature type="helix" evidence="4">
    <location>
        <begin position="13"/>
        <end position="24"/>
    </location>
</feature>
<feature type="strand" evidence="4">
    <location>
        <begin position="29"/>
        <end position="34"/>
    </location>
</feature>
<feature type="strand" evidence="3">
    <location>
        <begin position="36"/>
        <end position="38"/>
    </location>
</feature>
<feature type="helix" evidence="4">
    <location>
        <begin position="41"/>
        <end position="45"/>
    </location>
</feature>
<feature type="strand" evidence="4">
    <location>
        <begin position="49"/>
        <end position="53"/>
    </location>
</feature>
<feature type="helix" evidence="4">
    <location>
        <begin position="57"/>
        <end position="69"/>
    </location>
</feature>
<feature type="strand" evidence="4">
    <location>
        <begin position="73"/>
        <end position="76"/>
    </location>
</feature>
<feature type="helix" evidence="4">
    <location>
        <begin position="83"/>
        <end position="93"/>
    </location>
</feature>
<feature type="strand" evidence="4">
    <location>
        <begin position="100"/>
        <end position="103"/>
    </location>
</feature>
<feature type="helix" evidence="4">
    <location>
        <begin position="109"/>
        <end position="121"/>
    </location>
</feature>
<feature type="helix" evidence="4">
    <location>
        <begin position="122"/>
        <end position="124"/>
    </location>
</feature>
<feature type="strand" evidence="4">
    <location>
        <begin position="126"/>
        <end position="134"/>
    </location>
</feature>
<feature type="strand" evidence="4">
    <location>
        <begin position="140"/>
        <end position="142"/>
    </location>
</feature>
<feature type="helix" evidence="4">
    <location>
        <begin position="144"/>
        <end position="159"/>
    </location>
</feature>
<feature type="turn" evidence="4">
    <location>
        <begin position="174"/>
        <end position="177"/>
    </location>
</feature>
<feature type="strand" evidence="4">
    <location>
        <begin position="179"/>
        <end position="181"/>
    </location>
</feature>
<feature type="strand" evidence="4">
    <location>
        <begin position="184"/>
        <end position="190"/>
    </location>
</feature>
<feature type="strand" evidence="4">
    <location>
        <begin position="196"/>
        <end position="204"/>
    </location>
</feature>
<feature type="strand" evidence="4">
    <location>
        <begin position="207"/>
        <end position="218"/>
    </location>
</feature>
<feature type="helix" evidence="4">
    <location>
        <begin position="222"/>
        <end position="231"/>
    </location>
</feature>
<feature type="helix" evidence="4">
    <location>
        <begin position="232"/>
        <end position="234"/>
    </location>
</feature>
<feature type="strand" evidence="4">
    <location>
        <begin position="237"/>
        <end position="241"/>
    </location>
</feature>
<feature type="helix" evidence="4">
    <location>
        <begin position="242"/>
        <end position="245"/>
    </location>
</feature>
<protein>
    <recommendedName>
        <fullName evidence="1">4-hydroxy-tetrahydrodipicolinate reductase</fullName>
        <shortName evidence="1">HTPA reductase</shortName>
        <ecNumber evidence="1">1.17.1.8</ecNumber>
    </recommendedName>
</protein>
<evidence type="ECO:0000255" key="1">
    <source>
        <dbReference type="HAMAP-Rule" id="MF_00102"/>
    </source>
</evidence>
<evidence type="ECO:0000305" key="2"/>
<evidence type="ECO:0007829" key="3">
    <source>
        <dbReference type="PDB" id="5EER"/>
    </source>
</evidence>
<evidence type="ECO:0007829" key="4">
    <source>
        <dbReference type="PDB" id="5EES"/>
    </source>
</evidence>
<comment type="function">
    <text evidence="1">Catalyzes the conversion of 4-hydroxy-tetrahydrodipicolinate (HTPA) to tetrahydrodipicolinate.</text>
</comment>
<comment type="catalytic activity">
    <reaction evidence="1">
        <text>(S)-2,3,4,5-tetrahydrodipicolinate + NAD(+) + H2O = (2S,4S)-4-hydroxy-2,3,4,5-tetrahydrodipicolinate + NADH + H(+)</text>
        <dbReference type="Rhea" id="RHEA:35323"/>
        <dbReference type="ChEBI" id="CHEBI:15377"/>
        <dbReference type="ChEBI" id="CHEBI:15378"/>
        <dbReference type="ChEBI" id="CHEBI:16845"/>
        <dbReference type="ChEBI" id="CHEBI:57540"/>
        <dbReference type="ChEBI" id="CHEBI:57945"/>
        <dbReference type="ChEBI" id="CHEBI:67139"/>
        <dbReference type="EC" id="1.17.1.8"/>
    </reaction>
</comment>
<comment type="catalytic activity">
    <reaction evidence="1">
        <text>(S)-2,3,4,5-tetrahydrodipicolinate + NADP(+) + H2O = (2S,4S)-4-hydroxy-2,3,4,5-tetrahydrodipicolinate + NADPH + H(+)</text>
        <dbReference type="Rhea" id="RHEA:35331"/>
        <dbReference type="ChEBI" id="CHEBI:15377"/>
        <dbReference type="ChEBI" id="CHEBI:15378"/>
        <dbReference type="ChEBI" id="CHEBI:16845"/>
        <dbReference type="ChEBI" id="CHEBI:57783"/>
        <dbReference type="ChEBI" id="CHEBI:58349"/>
        <dbReference type="ChEBI" id="CHEBI:67139"/>
        <dbReference type="EC" id="1.17.1.8"/>
    </reaction>
</comment>
<comment type="pathway">
    <text evidence="1">Amino-acid biosynthesis; L-lysine biosynthesis via DAP pathway; (S)-tetrahydrodipicolinate from L-aspartate: step 4/4.</text>
</comment>
<comment type="subcellular location">
    <subcellularLocation>
        <location evidence="1">Cytoplasm</location>
    </subcellularLocation>
</comment>
<comment type="similarity">
    <text evidence="1">Belongs to the DapB family.</text>
</comment>
<comment type="caution">
    <text evidence="2">Was originally thought to be a dihydrodipicolinate reductase (DHDPR), catalyzing the conversion of dihydrodipicolinate to tetrahydrodipicolinate. However, it was shown in E.coli that the substrate of the enzymatic reaction is not dihydrodipicolinate (DHDP) but in fact (2S,4S)-4-hydroxy-2,3,4,5-tetrahydrodipicolinic acid (HTPA), the product released by the DapA-catalyzed reaction.</text>
</comment>
<organism>
    <name type="scientific">Corynebacterium glutamicum (strain ATCC 13032 / DSM 20300 / JCM 1318 / BCRC 11384 / CCUG 27702 / LMG 3730 / NBRC 12168 / NCIMB 10025 / NRRL B-2784 / 534)</name>
    <dbReference type="NCBI Taxonomy" id="196627"/>
    <lineage>
        <taxon>Bacteria</taxon>
        <taxon>Bacillati</taxon>
        <taxon>Actinomycetota</taxon>
        <taxon>Actinomycetes</taxon>
        <taxon>Mycobacteriales</taxon>
        <taxon>Corynebacteriaceae</taxon>
        <taxon>Corynebacterium</taxon>
    </lineage>
</organism>